<dbReference type="EMBL" id="AE001363">
    <property type="protein sequence ID" value="AAD18679.1"/>
    <property type="molecule type" value="Genomic_DNA"/>
</dbReference>
<dbReference type="EMBL" id="AE002161">
    <property type="protein sequence ID" value="AAF38083.1"/>
    <property type="molecule type" value="Genomic_DNA"/>
</dbReference>
<dbReference type="EMBL" id="BA000008">
    <property type="protein sequence ID" value="BAA98745.1"/>
    <property type="molecule type" value="Genomic_DNA"/>
</dbReference>
<dbReference type="EMBL" id="AE009440">
    <property type="protein sequence ID" value="AAP98489.1"/>
    <property type="molecule type" value="Genomic_DNA"/>
</dbReference>
<dbReference type="PIR" id="D72067">
    <property type="entry name" value="D72067"/>
</dbReference>
<dbReference type="PIR" id="G86557">
    <property type="entry name" value="G86557"/>
</dbReference>
<dbReference type="RefSeq" id="NP_224735.1">
    <property type="nucleotide sequence ID" value="NC_000922.1"/>
</dbReference>
<dbReference type="RefSeq" id="WP_010883177.1">
    <property type="nucleotide sequence ID" value="NZ_LN847257.1"/>
</dbReference>
<dbReference type="STRING" id="406984.CPK_ORF01054"/>
<dbReference type="GeneID" id="45050581"/>
<dbReference type="KEGG" id="cpa:CP_0213"/>
<dbReference type="KEGG" id="cpj:pmp_19"/>
<dbReference type="KEGG" id="cpn:CPn_0539"/>
<dbReference type="KEGG" id="cpt:CpB0560"/>
<dbReference type="PATRIC" id="fig|115713.3.peg.599"/>
<dbReference type="eggNOG" id="COG4625">
    <property type="taxonomic scope" value="Bacteria"/>
</dbReference>
<dbReference type="HOGENOM" id="CLU_004549_1_1_0"/>
<dbReference type="OrthoDB" id="18852at2"/>
<dbReference type="Proteomes" id="UP000000583">
    <property type="component" value="Chromosome"/>
</dbReference>
<dbReference type="Proteomes" id="UP000000801">
    <property type="component" value="Chromosome"/>
</dbReference>
<dbReference type="GO" id="GO:0009279">
    <property type="term" value="C:cell outer membrane"/>
    <property type="evidence" value="ECO:0007669"/>
    <property type="project" value="UniProtKB-SubCell"/>
</dbReference>
<dbReference type="GO" id="GO:0005576">
    <property type="term" value="C:extracellular region"/>
    <property type="evidence" value="ECO:0007669"/>
    <property type="project" value="UniProtKB-KW"/>
</dbReference>
<dbReference type="Gene3D" id="2.40.128.130">
    <property type="entry name" value="Autotransporter beta-domain"/>
    <property type="match status" value="1"/>
</dbReference>
<dbReference type="InterPro" id="IPR005546">
    <property type="entry name" value="Autotransporte_beta"/>
</dbReference>
<dbReference type="InterPro" id="IPR036709">
    <property type="entry name" value="Autotransporte_beta_dom_sf"/>
</dbReference>
<dbReference type="InterPro" id="IPR011050">
    <property type="entry name" value="Pectin_lyase_fold/virulence"/>
</dbReference>
<dbReference type="InterPro" id="IPR011427">
    <property type="entry name" value="Polymorphic_membr_middle"/>
</dbReference>
<dbReference type="InterPro" id="IPR003368">
    <property type="entry name" value="POMP_repeat"/>
</dbReference>
<dbReference type="NCBIfam" id="TIGR01376">
    <property type="entry name" value="POMP_repeat"/>
    <property type="match status" value="3"/>
</dbReference>
<dbReference type="Pfam" id="PF03797">
    <property type="entry name" value="Autotransporter"/>
    <property type="match status" value="1"/>
</dbReference>
<dbReference type="Pfam" id="PF02415">
    <property type="entry name" value="Chlam_PMP"/>
    <property type="match status" value="2"/>
</dbReference>
<dbReference type="Pfam" id="PF07548">
    <property type="entry name" value="ChlamPMP_M"/>
    <property type="match status" value="1"/>
</dbReference>
<dbReference type="SMART" id="SM00869">
    <property type="entry name" value="Autotransporter"/>
    <property type="match status" value="1"/>
</dbReference>
<dbReference type="SUPFAM" id="SSF103515">
    <property type="entry name" value="Autotransporter"/>
    <property type="match status" value="1"/>
</dbReference>
<dbReference type="SUPFAM" id="SSF51126">
    <property type="entry name" value="Pectin lyase-like"/>
    <property type="match status" value="1"/>
</dbReference>
<dbReference type="PROSITE" id="PS51208">
    <property type="entry name" value="AUTOTRANSPORTER"/>
    <property type="match status" value="1"/>
</dbReference>
<gene>
    <name type="primary">pmp19</name>
    <name type="ordered locus">CPn_0539</name>
    <name type="ordered locus">CP_0213</name>
    <name type="ordered locus">CpB0560</name>
</gene>
<accession>Q9Z813</accession>
<accession>Q9JSE2</accession>
<comment type="subcellular location">
    <subcellularLocation>
        <location>Secreted</location>
        <location>Cell wall</location>
    </subcellularLocation>
    <subcellularLocation>
        <location evidence="3">Cell outer membrane</location>
        <topology evidence="3">Peripheral membrane protein</topology>
        <orientation evidence="3">Extracellular side</orientation>
    </subcellularLocation>
</comment>
<comment type="developmental stage">
    <text>Elementary body.</text>
</comment>
<comment type="similarity">
    <text evidence="3">Belongs to the PMP outer membrane protein family.</text>
</comment>
<reference key="1">
    <citation type="journal article" date="1999" name="Nat. Genet.">
        <title>Comparative genomes of Chlamydia pneumoniae and C. trachomatis.</title>
        <authorList>
            <person name="Kalman S."/>
            <person name="Mitchell W.P."/>
            <person name="Marathe R."/>
            <person name="Lammel C.J."/>
            <person name="Fan J."/>
            <person name="Hyman R.W."/>
            <person name="Olinger L."/>
            <person name="Grimwood J."/>
            <person name="Davis R.W."/>
            <person name="Stephens R.S."/>
        </authorList>
    </citation>
    <scope>NUCLEOTIDE SEQUENCE [LARGE SCALE GENOMIC DNA]</scope>
    <source>
        <strain>CWL029</strain>
    </source>
</reference>
<reference key="2">
    <citation type="journal article" date="2000" name="Nucleic Acids Res.">
        <title>Genome sequences of Chlamydia trachomatis MoPn and Chlamydia pneumoniae AR39.</title>
        <authorList>
            <person name="Read T.D."/>
            <person name="Brunham R.C."/>
            <person name="Shen C."/>
            <person name="Gill S.R."/>
            <person name="Heidelberg J.F."/>
            <person name="White O."/>
            <person name="Hickey E.K."/>
            <person name="Peterson J.D."/>
            <person name="Utterback T.R."/>
            <person name="Berry K.J."/>
            <person name="Bass S."/>
            <person name="Linher K.D."/>
            <person name="Weidman J.F."/>
            <person name="Khouri H.M."/>
            <person name="Craven B."/>
            <person name="Bowman C."/>
            <person name="Dodson R.J."/>
            <person name="Gwinn M.L."/>
            <person name="Nelson W.C."/>
            <person name="DeBoy R.T."/>
            <person name="Kolonay J.F."/>
            <person name="McClarty G."/>
            <person name="Salzberg S.L."/>
            <person name="Eisen J.A."/>
            <person name="Fraser C.M."/>
        </authorList>
    </citation>
    <scope>NUCLEOTIDE SEQUENCE [LARGE SCALE GENOMIC DNA]</scope>
    <source>
        <strain>AR39</strain>
    </source>
</reference>
<reference key="3">
    <citation type="journal article" date="2000" name="Nucleic Acids Res.">
        <title>Comparison of whole genome sequences of Chlamydia pneumoniae J138 from Japan and CWL029 from USA.</title>
        <authorList>
            <person name="Shirai M."/>
            <person name="Hirakawa H."/>
            <person name="Kimoto M."/>
            <person name="Tabuchi M."/>
            <person name="Kishi F."/>
            <person name="Ouchi K."/>
            <person name="Shiba T."/>
            <person name="Ishii K."/>
            <person name="Hattori M."/>
            <person name="Kuhara S."/>
            <person name="Nakazawa T."/>
        </authorList>
    </citation>
    <scope>NUCLEOTIDE SEQUENCE [LARGE SCALE GENOMIC DNA]</scope>
    <source>
        <strain>J138</strain>
    </source>
</reference>
<reference key="4">
    <citation type="journal article" date="2000" name="J. Infect. Dis. 181 Suppl.">
        <title>Comparison of outer membrane protein genes omp and pmp in the whole genome sequences of Chlamydia pneumoniae isolates from Japan and the United States.</title>
        <authorList>
            <person name="Shirai M."/>
            <person name="Hirakawa H."/>
            <person name="Ouchi K."/>
            <person name="Tabuchi M."/>
            <person name="Kishi F."/>
            <person name="Kimoto M."/>
            <person name="Takeuchi H."/>
            <person name="Nishida J."/>
            <person name="Shibata K."/>
            <person name="Fujinaga R."/>
            <person name="Yoneda H."/>
            <person name="Matsushima H."/>
            <person name="Tanaka C."/>
            <person name="Furukawa S."/>
            <person name="Miura K."/>
            <person name="Nakazawa A."/>
            <person name="Ishii K."/>
            <person name="Shiba T."/>
            <person name="Hattori M."/>
            <person name="Kuhara S."/>
            <person name="Nakazawa T."/>
        </authorList>
    </citation>
    <scope>NUCLEOTIDE SEQUENCE [GENOMIC DNA]</scope>
    <source>
        <strain>J138</strain>
    </source>
</reference>
<reference key="5">
    <citation type="submission" date="2002-05" db="EMBL/GenBank/DDBJ databases">
        <title>The genome sequence of Chlamydia pneumoniae TW183 and comparison with other Chlamydia strains based on whole genome sequence analysis.</title>
        <authorList>
            <person name="Geng M.M."/>
            <person name="Schuhmacher A."/>
            <person name="Muehldorfer I."/>
            <person name="Bensch K.W."/>
            <person name="Schaefer K.P."/>
            <person name="Schneider S."/>
            <person name="Pohl T."/>
            <person name="Essig A."/>
            <person name="Marre R."/>
            <person name="Melchers K."/>
        </authorList>
    </citation>
    <scope>NUCLEOTIDE SEQUENCE [LARGE SCALE GENOMIC DNA]</scope>
    <source>
        <strain>TW-183</strain>
    </source>
</reference>
<sequence length="947" mass="103643">MKQMRLWGFLFLSSFCQVSYLRANDVLLPLSGIHSGEDLELFTLRSSSPTKTTYSLRKDFIVCDFAGNSIHKPGAAFLNLKGDLFFINSTPLAALTFKNIHLGARGAGLFSESNVTFKGLHSLVLENNESWGGVLTTSGDLSFINNTSVLCQNNISYGPGGALLLQGRKSKALFFRDNRGTILFLKNKAVNQDESHPGYGGAVSSISPGSPITFADNQEILFQENEGELGGAIYNDQGAITFENNFQTTSFFSNKASFGGAVYSRYCNLYSQWGDTLFTKNAAAKVGGAIHADYVHIRDCKGSIVFEENSATAGGAIAVNAVCDINAQGPVRFINNSALGLNGGAIYMQATGSILRLHANQGDIEFCGNKVRSQFHSHINSTSNFTNNAITIQGAPREFSLSANEGHRICFYDPIISATENYNSLYINHQRLLEAGGAVIFSGARLSPEHKKENKNKTSIINQPVRLCSGVLSIEGGAILAVRSFYQEGGLLALGPGSKLTTQGKNSEKDKIVITNLGFNLENLDSSDPAEIRATEKASIEISGVPRVYGHTESFYENHEYASKPYTTSIILSAKKLVTAPSRPEKDIQNLIIAESEYMGYGYQGSWEFSWSPNDTKEKKTIIASWTPTGEFSLDPKRRGSFIPTTLWSTFSGLNIASNIVNNNYLNNSEVIPLQHLCVFGGPVYQIMEQNPKQSSNNLLVQHAGHNVGARIPFSFNTILSAALTQLFSSSSQQNVADKSHAQILIGTVSLNKSWQALSLRSSFSYTEDSQVMKHVFPYKGTSRGSWRNYGWSGSVGMSYAYPKGIRYLKMTPFVDLQYTKLVQNPFVETGYDPRYFSSSEMTNLSLPIGIALEMRFIGSRSSLFLQVSTSYIKDLRRVNPQSSASLVLNHYTWDIQGVPLGKEALNITLNSTIKYKIVTAYMGISSTQREGSNLSANAHAGLSLSF</sequence>
<evidence type="ECO:0000255" key="1"/>
<evidence type="ECO:0000255" key="2">
    <source>
        <dbReference type="PROSITE-ProRule" id="PRU00556"/>
    </source>
</evidence>
<evidence type="ECO:0000305" key="3"/>
<feature type="signal peptide" evidence="1">
    <location>
        <begin position="1"/>
        <end position="19"/>
    </location>
</feature>
<feature type="chain" id="PRO_0000024748" description="Probable outer membrane protein pmp19">
    <location>
        <begin position="20"/>
        <end position="947"/>
    </location>
</feature>
<feature type="domain" description="Autotransporter" evidence="2">
    <location>
        <begin position="672"/>
        <end position="947"/>
    </location>
</feature>
<feature type="sequence conflict" description="In Ref. 3; BAA98745." evidence="3" ref="3">
    <original>E</original>
    <variation>D</variation>
    <location>
        <position position="453"/>
    </location>
</feature>
<proteinExistence type="evidence at transcript level"/>
<organism>
    <name type="scientific">Chlamydia pneumoniae</name>
    <name type="common">Chlamydophila pneumoniae</name>
    <dbReference type="NCBI Taxonomy" id="83558"/>
    <lineage>
        <taxon>Bacteria</taxon>
        <taxon>Pseudomonadati</taxon>
        <taxon>Chlamydiota</taxon>
        <taxon>Chlamydiia</taxon>
        <taxon>Chlamydiales</taxon>
        <taxon>Chlamydiaceae</taxon>
        <taxon>Chlamydia/Chlamydophila group</taxon>
        <taxon>Chlamydia</taxon>
    </lineage>
</organism>
<name>PMP19_CHLPN</name>
<keyword id="KW-0998">Cell outer membrane</keyword>
<keyword id="KW-0134">Cell wall</keyword>
<keyword id="KW-0472">Membrane</keyword>
<keyword id="KW-0964">Secreted</keyword>
<keyword id="KW-0732">Signal</keyword>
<keyword id="KW-0812">Transmembrane</keyword>
<keyword id="KW-1134">Transmembrane beta strand</keyword>
<protein>
    <recommendedName>
        <fullName>Probable outer membrane protein pmp19</fullName>
    </recommendedName>
    <alternativeName>
        <fullName>Polymorphic membrane protein 19</fullName>
    </alternativeName>
</protein>